<organism>
    <name type="scientific">Dictyostelium discoideum</name>
    <name type="common">Social amoeba</name>
    <dbReference type="NCBI Taxonomy" id="44689"/>
    <lineage>
        <taxon>Eukaryota</taxon>
        <taxon>Amoebozoa</taxon>
        <taxon>Evosea</taxon>
        <taxon>Eumycetozoa</taxon>
        <taxon>Dictyostelia</taxon>
        <taxon>Dictyosteliales</taxon>
        <taxon>Dictyosteliaceae</taxon>
        <taxon>Dictyostelium</taxon>
    </lineage>
</organism>
<gene>
    <name type="primary">adcA</name>
    <name type="ORF">DDB_G0292924</name>
</gene>
<protein>
    <recommendedName>
        <fullName>Arrestin domain-containing protein A</fullName>
    </recommendedName>
</protein>
<evidence type="ECO:0000255" key="1"/>
<evidence type="ECO:0000255" key="2">
    <source>
        <dbReference type="PROSITE-ProRule" id="PRU00091"/>
    </source>
</evidence>
<evidence type="ECO:0000256" key="3">
    <source>
        <dbReference type="SAM" id="MobiDB-lite"/>
    </source>
</evidence>
<evidence type="ECO:0000305" key="4"/>
<keyword id="KW-0325">Glycoprotein</keyword>
<keyword id="KW-0472">Membrane</keyword>
<keyword id="KW-0479">Metal-binding</keyword>
<keyword id="KW-1185">Reference proteome</keyword>
<keyword id="KW-0812">Transmembrane</keyword>
<keyword id="KW-1133">Transmembrane helix</keyword>
<keyword id="KW-0862">Zinc</keyword>
<keyword id="KW-0863">Zinc-finger</keyword>
<comment type="subcellular location">
    <subcellularLocation>
        <location evidence="4">Membrane</location>
        <topology evidence="4">Single-pass membrane protein</topology>
    </subcellularLocation>
</comment>
<comment type="similarity">
    <text evidence="4">Belongs to the arrestin family.</text>
</comment>
<accession>Q54CH1</accession>
<reference key="1">
    <citation type="journal article" date="2005" name="Nature">
        <title>The genome of the social amoeba Dictyostelium discoideum.</title>
        <authorList>
            <person name="Eichinger L."/>
            <person name="Pachebat J.A."/>
            <person name="Gloeckner G."/>
            <person name="Rajandream M.A."/>
            <person name="Sucgang R."/>
            <person name="Berriman M."/>
            <person name="Song J."/>
            <person name="Olsen R."/>
            <person name="Szafranski K."/>
            <person name="Xu Q."/>
            <person name="Tunggal B."/>
            <person name="Kummerfeld S."/>
            <person name="Madera M."/>
            <person name="Konfortov B.A."/>
            <person name="Rivero F."/>
            <person name="Bankier A.T."/>
            <person name="Lehmann R."/>
            <person name="Hamlin N."/>
            <person name="Davies R."/>
            <person name="Gaudet P."/>
            <person name="Fey P."/>
            <person name="Pilcher K."/>
            <person name="Chen G."/>
            <person name="Saunders D."/>
            <person name="Sodergren E.J."/>
            <person name="Davis P."/>
            <person name="Kerhornou A."/>
            <person name="Nie X."/>
            <person name="Hall N."/>
            <person name="Anjard C."/>
            <person name="Hemphill L."/>
            <person name="Bason N."/>
            <person name="Farbrother P."/>
            <person name="Desany B."/>
            <person name="Just E."/>
            <person name="Morio T."/>
            <person name="Rost R."/>
            <person name="Churcher C.M."/>
            <person name="Cooper J."/>
            <person name="Haydock S."/>
            <person name="van Driessche N."/>
            <person name="Cronin A."/>
            <person name="Goodhead I."/>
            <person name="Muzny D.M."/>
            <person name="Mourier T."/>
            <person name="Pain A."/>
            <person name="Lu M."/>
            <person name="Harper D."/>
            <person name="Lindsay R."/>
            <person name="Hauser H."/>
            <person name="James K.D."/>
            <person name="Quiles M."/>
            <person name="Madan Babu M."/>
            <person name="Saito T."/>
            <person name="Buchrieser C."/>
            <person name="Wardroper A."/>
            <person name="Felder M."/>
            <person name="Thangavelu M."/>
            <person name="Johnson D."/>
            <person name="Knights A."/>
            <person name="Loulseged H."/>
            <person name="Mungall K.L."/>
            <person name="Oliver K."/>
            <person name="Price C."/>
            <person name="Quail M.A."/>
            <person name="Urushihara H."/>
            <person name="Hernandez J."/>
            <person name="Rabbinowitsch E."/>
            <person name="Steffen D."/>
            <person name="Sanders M."/>
            <person name="Ma J."/>
            <person name="Kohara Y."/>
            <person name="Sharp S."/>
            <person name="Simmonds M.N."/>
            <person name="Spiegler S."/>
            <person name="Tivey A."/>
            <person name="Sugano S."/>
            <person name="White B."/>
            <person name="Walker D."/>
            <person name="Woodward J.R."/>
            <person name="Winckler T."/>
            <person name="Tanaka Y."/>
            <person name="Shaulsky G."/>
            <person name="Schleicher M."/>
            <person name="Weinstock G.M."/>
            <person name="Rosenthal A."/>
            <person name="Cox E.C."/>
            <person name="Chisholm R.L."/>
            <person name="Gibbs R.A."/>
            <person name="Loomis W.F."/>
            <person name="Platzer M."/>
            <person name="Kay R.R."/>
            <person name="Williams J.G."/>
            <person name="Dear P.H."/>
            <person name="Noegel A.A."/>
            <person name="Barrell B.G."/>
            <person name="Kuspa A."/>
        </authorList>
    </citation>
    <scope>NUCLEOTIDE SEQUENCE [LARGE SCALE GENOMIC DNA]</scope>
    <source>
        <strain>AX4</strain>
    </source>
</reference>
<reference key="2">
    <citation type="journal article" date="2006" name="J. Proteome Res.">
        <title>Identification of novel centrosomal proteins in Dictyostelium discoideum by comparative proteomic approaches.</title>
        <authorList>
            <person name="Reinders Y."/>
            <person name="Schulz I."/>
            <person name="Graef R."/>
            <person name="Sickmann A."/>
        </authorList>
    </citation>
    <scope>IDENTIFICATION BY MASS SPECTROMETRY [LARGE SCALE ANALYSIS]</scope>
</reference>
<dbReference type="EMBL" id="AAFI02000197">
    <property type="protein sequence ID" value="EAL61011.1"/>
    <property type="molecule type" value="Genomic_DNA"/>
</dbReference>
<dbReference type="RefSeq" id="XP_629445.1">
    <property type="nucleotide sequence ID" value="XM_629443.1"/>
</dbReference>
<dbReference type="SMR" id="Q54CH1"/>
<dbReference type="FunCoup" id="Q54CH1">
    <property type="interactions" value="9"/>
</dbReference>
<dbReference type="IntAct" id="Q54CH1">
    <property type="interactions" value="9"/>
</dbReference>
<dbReference type="STRING" id="44689.Q54CH1"/>
<dbReference type="GlyCosmos" id="Q54CH1">
    <property type="glycosylation" value="6 sites, No reported glycans"/>
</dbReference>
<dbReference type="GlyGen" id="Q54CH1">
    <property type="glycosylation" value="6 sites"/>
</dbReference>
<dbReference type="PaxDb" id="44689-DDB0233899"/>
<dbReference type="EnsemblProtists" id="EAL61011">
    <property type="protein sequence ID" value="EAL61011"/>
    <property type="gene ID" value="DDB_G0292924"/>
</dbReference>
<dbReference type="GeneID" id="8628964"/>
<dbReference type="KEGG" id="ddi:DDB_G0292924"/>
<dbReference type="dictyBase" id="DDB_G0292924">
    <property type="gene designation" value="adcA"/>
</dbReference>
<dbReference type="VEuPathDB" id="AmoebaDB:DDB_G0292924"/>
<dbReference type="eggNOG" id="KOG1729">
    <property type="taxonomic scope" value="Eukaryota"/>
</dbReference>
<dbReference type="HOGENOM" id="CLU_470470_0_0_1"/>
<dbReference type="InParanoid" id="Q54CH1"/>
<dbReference type="OMA" id="GHYSFPF"/>
<dbReference type="PhylomeDB" id="Q54CH1"/>
<dbReference type="PRO" id="PR:Q54CH1"/>
<dbReference type="Proteomes" id="UP000002195">
    <property type="component" value="Chromosome 6"/>
</dbReference>
<dbReference type="GO" id="GO:0005737">
    <property type="term" value="C:cytoplasm"/>
    <property type="evidence" value="ECO:0000318"/>
    <property type="project" value="GO_Central"/>
</dbReference>
<dbReference type="GO" id="GO:0005769">
    <property type="term" value="C:early endosome"/>
    <property type="evidence" value="ECO:0000314"/>
    <property type="project" value="dictyBase"/>
</dbReference>
<dbReference type="GO" id="GO:0044354">
    <property type="term" value="C:macropinosome"/>
    <property type="evidence" value="ECO:0000314"/>
    <property type="project" value="dictyBase"/>
</dbReference>
<dbReference type="GO" id="GO:0016020">
    <property type="term" value="C:membrane"/>
    <property type="evidence" value="ECO:0007669"/>
    <property type="project" value="UniProtKB-SubCell"/>
</dbReference>
<dbReference type="GO" id="GO:0045335">
    <property type="term" value="C:phagocytic vesicle"/>
    <property type="evidence" value="ECO:0000314"/>
    <property type="project" value="dictyBase"/>
</dbReference>
<dbReference type="GO" id="GO:0032266">
    <property type="term" value="F:phosphatidylinositol-3-phosphate binding"/>
    <property type="evidence" value="ECO:0000314"/>
    <property type="project" value="dictyBase"/>
</dbReference>
<dbReference type="GO" id="GO:0008270">
    <property type="term" value="F:zinc ion binding"/>
    <property type="evidence" value="ECO:0007669"/>
    <property type="project" value="UniProtKB-KW"/>
</dbReference>
<dbReference type="GO" id="GO:0071474">
    <property type="term" value="P:cellular hyperosmotic response"/>
    <property type="evidence" value="ECO:0000314"/>
    <property type="project" value="dictyBase"/>
</dbReference>
<dbReference type="GO" id="GO:0034605">
    <property type="term" value="P:cellular response to heat"/>
    <property type="evidence" value="ECO:0000314"/>
    <property type="project" value="dictyBase"/>
</dbReference>
<dbReference type="GO" id="GO:0034599">
    <property type="term" value="P:cellular response to oxidative stress"/>
    <property type="evidence" value="ECO:0000314"/>
    <property type="project" value="dictyBase"/>
</dbReference>
<dbReference type="GO" id="GO:0015031">
    <property type="term" value="P:protein transport"/>
    <property type="evidence" value="ECO:0000318"/>
    <property type="project" value="GO_Central"/>
</dbReference>
<dbReference type="GO" id="GO:0080135">
    <property type="term" value="P:regulation of cellular response to stress"/>
    <property type="evidence" value="ECO:0000315"/>
    <property type="project" value="dictyBase"/>
</dbReference>
<dbReference type="CDD" id="cd15730">
    <property type="entry name" value="FYVE_EEA1"/>
    <property type="match status" value="1"/>
</dbReference>
<dbReference type="Gene3D" id="2.60.40.640">
    <property type="match status" value="2"/>
</dbReference>
<dbReference type="Gene3D" id="3.30.40.10">
    <property type="entry name" value="Zinc/RING finger domain, C3HC4 (zinc finger)"/>
    <property type="match status" value="1"/>
</dbReference>
<dbReference type="InterPro" id="IPR014752">
    <property type="entry name" value="Arrestin-like_C"/>
</dbReference>
<dbReference type="InterPro" id="IPR011021">
    <property type="entry name" value="Arrestin-like_N"/>
</dbReference>
<dbReference type="InterPro" id="IPR011022">
    <property type="entry name" value="Arrestin_C-like"/>
</dbReference>
<dbReference type="InterPro" id="IPR050357">
    <property type="entry name" value="Arrestin_domain-protein"/>
</dbReference>
<dbReference type="InterPro" id="IPR014756">
    <property type="entry name" value="Ig_E-set"/>
</dbReference>
<dbReference type="InterPro" id="IPR000306">
    <property type="entry name" value="Znf_FYVE"/>
</dbReference>
<dbReference type="InterPro" id="IPR017455">
    <property type="entry name" value="Znf_FYVE-rel"/>
</dbReference>
<dbReference type="InterPro" id="IPR011011">
    <property type="entry name" value="Znf_FYVE_PHD"/>
</dbReference>
<dbReference type="InterPro" id="IPR013083">
    <property type="entry name" value="Znf_RING/FYVE/PHD"/>
</dbReference>
<dbReference type="PANTHER" id="PTHR11188">
    <property type="entry name" value="ARRESTIN DOMAIN CONTAINING PROTEIN"/>
    <property type="match status" value="1"/>
</dbReference>
<dbReference type="PANTHER" id="PTHR11188:SF169">
    <property type="entry name" value="ARRESTIN DOMAIN-CONTAINING PROTEIN A"/>
    <property type="match status" value="1"/>
</dbReference>
<dbReference type="Pfam" id="PF02752">
    <property type="entry name" value="Arrestin_C"/>
    <property type="match status" value="1"/>
</dbReference>
<dbReference type="Pfam" id="PF00339">
    <property type="entry name" value="Arrestin_N"/>
    <property type="match status" value="1"/>
</dbReference>
<dbReference type="Pfam" id="PF01363">
    <property type="entry name" value="FYVE"/>
    <property type="match status" value="1"/>
</dbReference>
<dbReference type="SMART" id="SM01017">
    <property type="entry name" value="Arrestin_C"/>
    <property type="match status" value="1"/>
</dbReference>
<dbReference type="SMART" id="SM00064">
    <property type="entry name" value="FYVE"/>
    <property type="match status" value="1"/>
</dbReference>
<dbReference type="SUPFAM" id="SSF81296">
    <property type="entry name" value="E set domains"/>
    <property type="match status" value="2"/>
</dbReference>
<dbReference type="SUPFAM" id="SSF57903">
    <property type="entry name" value="FYVE/PHD zinc finger"/>
    <property type="match status" value="1"/>
</dbReference>
<dbReference type="PROSITE" id="PS50178">
    <property type="entry name" value="ZF_FYVE"/>
    <property type="match status" value="1"/>
</dbReference>
<name>ADCA_DICDI</name>
<sequence length="580" mass="64537">MNYQVTVSGDPELAQESVDFVSSGFGNMSMNVNTTSSHHHHHSNSGNAEVSFNGGFGMPNMTMEVKETHSGHHHHHSNGGNAEISINSGFGMPSMTMSVTDSNSGHHHHHHKESASVNLSLGGIVGAVVGAVTGGVMIDGRNRIWVQLNQSSYVGGDIISGTIEMDCIVPFFAKGVIVKVKGFERLWLQELRTETEGEGSNKRTVYKTIDHKENKEFFKSTIVVYPQAGTVNCGHYSFPFSYQLPSDLPGTFCHDGKDAMGAYSAKILYKCKATVDVAHKHDLKSTTKLIINEKCGELVQPSFAENKKSFMLTKGKLHVKTWLNKNAYFPGETLVAKMKANNTSIKPTRKISLVVHHTMQLKTRLYHRCITNAIYKQQYDGFQPCFYGKRYLPFSIPVDLKPSSSLGKHITSSYLLELECDIPMAIDLSVTLPLTLFAPQFLYSTVPSQPPGTPLPPDVSYRHPWEGDEHATACRKCNKGFSLFARKHHCRHCMKIFCDKCTSTKTTITKLAYPKPVRVCEECYPIATQGGNKYQSAKLMAAQYQASLNAYYAQYASLYPQIYPDQQQQQQQPSAPPQQY</sequence>
<feature type="chain" id="PRO_0000363154" description="Arrestin domain-containing protein A">
    <location>
        <begin position="1"/>
        <end position="580"/>
    </location>
</feature>
<feature type="transmembrane region" description="Helical" evidence="1">
    <location>
        <begin position="118"/>
        <end position="138"/>
    </location>
</feature>
<feature type="zinc finger region" description="FYVE-type" evidence="2">
    <location>
        <begin position="468"/>
        <end position="528"/>
    </location>
</feature>
<feature type="region of interest" description="Disordered" evidence="3">
    <location>
        <begin position="31"/>
        <end position="54"/>
    </location>
</feature>
<feature type="region of interest" description="Disordered" evidence="3">
    <location>
        <begin position="67"/>
        <end position="86"/>
    </location>
</feature>
<feature type="region of interest" description="Disordered" evidence="3">
    <location>
        <begin position="95"/>
        <end position="114"/>
    </location>
</feature>
<feature type="binding site" evidence="2">
    <location>
        <position position="474"/>
    </location>
    <ligand>
        <name>Zn(2+)</name>
        <dbReference type="ChEBI" id="CHEBI:29105"/>
        <label>1</label>
    </ligand>
</feature>
<feature type="binding site" evidence="2">
    <location>
        <position position="477"/>
    </location>
    <ligand>
        <name>Zn(2+)</name>
        <dbReference type="ChEBI" id="CHEBI:29105"/>
        <label>1</label>
    </ligand>
</feature>
<feature type="binding site" evidence="2">
    <location>
        <position position="490"/>
    </location>
    <ligand>
        <name>Zn(2+)</name>
        <dbReference type="ChEBI" id="CHEBI:29105"/>
        <label>2</label>
    </ligand>
</feature>
<feature type="binding site" evidence="2">
    <location>
        <position position="493"/>
    </location>
    <ligand>
        <name>Zn(2+)</name>
        <dbReference type="ChEBI" id="CHEBI:29105"/>
        <label>2</label>
    </ligand>
</feature>
<feature type="binding site" evidence="2">
    <location>
        <position position="498"/>
    </location>
    <ligand>
        <name>Zn(2+)</name>
        <dbReference type="ChEBI" id="CHEBI:29105"/>
        <label>1</label>
    </ligand>
</feature>
<feature type="binding site" evidence="2">
    <location>
        <position position="501"/>
    </location>
    <ligand>
        <name>Zn(2+)</name>
        <dbReference type="ChEBI" id="CHEBI:29105"/>
        <label>1</label>
    </ligand>
</feature>
<feature type="binding site" evidence="2">
    <location>
        <position position="520"/>
    </location>
    <ligand>
        <name>Zn(2+)</name>
        <dbReference type="ChEBI" id="CHEBI:29105"/>
        <label>2</label>
    </ligand>
</feature>
<feature type="binding site" evidence="2">
    <location>
        <position position="523"/>
    </location>
    <ligand>
        <name>Zn(2+)</name>
        <dbReference type="ChEBI" id="CHEBI:29105"/>
        <label>2</label>
    </ligand>
</feature>
<feature type="glycosylation site" description="N-linked (GlcNAc...) asparagine" evidence="1">
    <location>
        <position position="27"/>
    </location>
</feature>
<feature type="glycosylation site" description="N-linked (GlcNAc...) asparagine" evidence="1">
    <location>
        <position position="33"/>
    </location>
</feature>
<feature type="glycosylation site" description="N-linked (GlcNAc...) asparagine" evidence="1">
    <location>
        <position position="60"/>
    </location>
</feature>
<feature type="glycosylation site" description="N-linked (GlcNAc...) asparagine" evidence="1">
    <location>
        <position position="149"/>
    </location>
</feature>
<feature type="glycosylation site" description="N-linked (GlcNAc...) asparagine" evidence="1">
    <location>
        <position position="341"/>
    </location>
</feature>
<feature type="glycosylation site" description="N-linked (GlcNAc...) asparagine" evidence="1">
    <location>
        <position position="342"/>
    </location>
</feature>
<proteinExistence type="evidence at protein level"/>